<sequence>MMIKGMAEDDCADNGIPLPNVTSKILLLVIEYCKKHVVESKEEDLKKWDAEFMKKMEQSILFDVMMAANYLNIQSLLDLTFSNCR</sequence>
<name>ASK6_ARATH</name>
<keyword id="KW-0539">Nucleus</keyword>
<keyword id="KW-1185">Reference proteome</keyword>
<keyword id="KW-0833">Ubl conjugation pathway</keyword>
<organism>
    <name type="scientific">Arabidopsis thaliana</name>
    <name type="common">Mouse-ear cress</name>
    <dbReference type="NCBI Taxonomy" id="3702"/>
    <lineage>
        <taxon>Eukaryota</taxon>
        <taxon>Viridiplantae</taxon>
        <taxon>Streptophyta</taxon>
        <taxon>Embryophyta</taxon>
        <taxon>Tracheophyta</taxon>
        <taxon>Spermatophyta</taxon>
        <taxon>Magnoliopsida</taxon>
        <taxon>eudicotyledons</taxon>
        <taxon>Gunneridae</taxon>
        <taxon>Pentapetalae</taxon>
        <taxon>rosids</taxon>
        <taxon>malvids</taxon>
        <taxon>Brassicales</taxon>
        <taxon>Brassicaceae</taxon>
        <taxon>Camelineae</taxon>
        <taxon>Arabidopsis</taxon>
    </lineage>
</organism>
<comment type="function">
    <text evidence="1">Involved in ubiquitination and subsequent proteasomal degradation of target proteins. Together with CUL1, RBX1 and a F-box protein, it forms a SCF E3 ubiquitin ligase complex. The functional specificity of this complex depends on the type of F-box protein. In the SCF complex, it serves as an adapter that links the F-box protein to CUL1 (By similarity).</text>
</comment>
<comment type="pathway">
    <text>Protein modification; protein ubiquitination.</text>
</comment>
<comment type="subunit">
    <text evidence="1">Part of a SCF (SKP1-cullin-F-box) protein ligase complex.</text>
</comment>
<comment type="subcellular location">
    <subcellularLocation>
        <location evidence="1">Nucleus</location>
    </subcellularLocation>
</comment>
<comment type="miscellaneous">
    <text>May be the product of a pseudogene.</text>
</comment>
<comment type="similarity">
    <text evidence="2">Belongs to the SKP1 family.</text>
</comment>
<comment type="sequence caution" evidence="2">
    <conflict type="erroneous termination">
        <sequence resource="EMBL-CDS" id="ABK28601"/>
    </conflict>
    <text>Extended C-terminus.</text>
</comment>
<comment type="sequence caution" evidence="2">
    <conflict type="erroneous gene model prediction">
        <sequence resource="EMBL-CDS" id="CAB86910"/>
    </conflict>
</comment>
<proteinExistence type="inferred from homology"/>
<gene>
    <name type="primary">ASK6</name>
    <name type="ordered locus">At3g53060</name>
    <name type="ORF">F8J2.230</name>
</gene>
<reference key="1">
    <citation type="journal article" date="2000" name="Nature">
        <title>Sequence and analysis of chromosome 3 of the plant Arabidopsis thaliana.</title>
        <authorList>
            <person name="Salanoubat M."/>
            <person name="Lemcke K."/>
            <person name="Rieger M."/>
            <person name="Ansorge W."/>
            <person name="Unseld M."/>
            <person name="Fartmann B."/>
            <person name="Valle G."/>
            <person name="Bloecker H."/>
            <person name="Perez-Alonso M."/>
            <person name="Obermaier B."/>
            <person name="Delseny M."/>
            <person name="Boutry M."/>
            <person name="Grivell L.A."/>
            <person name="Mache R."/>
            <person name="Puigdomenech P."/>
            <person name="De Simone V."/>
            <person name="Choisne N."/>
            <person name="Artiguenave F."/>
            <person name="Robert C."/>
            <person name="Brottier P."/>
            <person name="Wincker P."/>
            <person name="Cattolico L."/>
            <person name="Weissenbach J."/>
            <person name="Saurin W."/>
            <person name="Quetier F."/>
            <person name="Schaefer M."/>
            <person name="Mueller-Auer S."/>
            <person name="Gabel C."/>
            <person name="Fuchs M."/>
            <person name="Benes V."/>
            <person name="Wurmbach E."/>
            <person name="Drzonek H."/>
            <person name="Erfle H."/>
            <person name="Jordan N."/>
            <person name="Bangert S."/>
            <person name="Wiedelmann R."/>
            <person name="Kranz H."/>
            <person name="Voss H."/>
            <person name="Holland R."/>
            <person name="Brandt P."/>
            <person name="Nyakatura G."/>
            <person name="Vezzi A."/>
            <person name="D'Angelo M."/>
            <person name="Pallavicini A."/>
            <person name="Toppo S."/>
            <person name="Simionati B."/>
            <person name="Conrad A."/>
            <person name="Hornischer K."/>
            <person name="Kauer G."/>
            <person name="Loehnert T.-H."/>
            <person name="Nordsiek G."/>
            <person name="Reichelt J."/>
            <person name="Scharfe M."/>
            <person name="Schoen O."/>
            <person name="Bargues M."/>
            <person name="Terol J."/>
            <person name="Climent J."/>
            <person name="Navarro P."/>
            <person name="Collado C."/>
            <person name="Perez-Perez A."/>
            <person name="Ottenwaelder B."/>
            <person name="Duchemin D."/>
            <person name="Cooke R."/>
            <person name="Laudie M."/>
            <person name="Berger-Llauro C."/>
            <person name="Purnelle B."/>
            <person name="Masuy D."/>
            <person name="de Haan M."/>
            <person name="Maarse A.C."/>
            <person name="Alcaraz J.-P."/>
            <person name="Cottet A."/>
            <person name="Casacuberta E."/>
            <person name="Monfort A."/>
            <person name="Argiriou A."/>
            <person name="Flores M."/>
            <person name="Liguori R."/>
            <person name="Vitale D."/>
            <person name="Mannhaupt G."/>
            <person name="Haase D."/>
            <person name="Schoof H."/>
            <person name="Rudd S."/>
            <person name="Zaccaria P."/>
            <person name="Mewes H.-W."/>
            <person name="Mayer K.F.X."/>
            <person name="Kaul S."/>
            <person name="Town C.D."/>
            <person name="Koo H.L."/>
            <person name="Tallon L.J."/>
            <person name="Jenkins J."/>
            <person name="Rooney T."/>
            <person name="Rizzo M."/>
            <person name="Walts A."/>
            <person name="Utterback T."/>
            <person name="Fujii C.Y."/>
            <person name="Shea T.P."/>
            <person name="Creasy T.H."/>
            <person name="Haas B."/>
            <person name="Maiti R."/>
            <person name="Wu D."/>
            <person name="Peterson J."/>
            <person name="Van Aken S."/>
            <person name="Pai G."/>
            <person name="Militscher J."/>
            <person name="Sellers P."/>
            <person name="Gill J.E."/>
            <person name="Feldblyum T.V."/>
            <person name="Preuss D."/>
            <person name="Lin X."/>
            <person name="Nierman W.C."/>
            <person name="Salzberg S.L."/>
            <person name="White O."/>
            <person name="Venter J.C."/>
            <person name="Fraser C.M."/>
            <person name="Kaneko T."/>
            <person name="Nakamura Y."/>
            <person name="Sato S."/>
            <person name="Kato T."/>
            <person name="Asamizu E."/>
            <person name="Sasamoto S."/>
            <person name="Kimura T."/>
            <person name="Idesawa K."/>
            <person name="Kawashima K."/>
            <person name="Kishida Y."/>
            <person name="Kiyokawa C."/>
            <person name="Kohara M."/>
            <person name="Matsumoto M."/>
            <person name="Matsuno A."/>
            <person name="Muraki A."/>
            <person name="Nakayama S."/>
            <person name="Nakazaki N."/>
            <person name="Shinpo S."/>
            <person name="Takeuchi C."/>
            <person name="Wada T."/>
            <person name="Watanabe A."/>
            <person name="Yamada M."/>
            <person name="Yasuda M."/>
            <person name="Tabata S."/>
        </authorList>
    </citation>
    <scope>NUCLEOTIDE SEQUENCE [LARGE SCALE GENOMIC DNA]</scope>
    <source>
        <strain>cv. Columbia</strain>
    </source>
</reference>
<reference key="2">
    <citation type="journal article" date="2017" name="Plant J.">
        <title>Araport11: a complete reannotation of the Arabidopsis thaliana reference genome.</title>
        <authorList>
            <person name="Cheng C.Y."/>
            <person name="Krishnakumar V."/>
            <person name="Chan A.P."/>
            <person name="Thibaud-Nissen F."/>
            <person name="Schobel S."/>
            <person name="Town C.D."/>
        </authorList>
    </citation>
    <scope>GENOME REANNOTATION</scope>
    <source>
        <strain>cv. Columbia</strain>
    </source>
</reference>
<reference key="3">
    <citation type="journal article" date="2006" name="Plant Biotechnol. J.">
        <title>Simultaneous high-throughput recombinational cloning of open reading frames in closed and open configurations.</title>
        <authorList>
            <person name="Underwood B.A."/>
            <person name="Vanderhaeghen R."/>
            <person name="Whitford R."/>
            <person name="Town C.D."/>
            <person name="Hilson P."/>
        </authorList>
    </citation>
    <scope>NUCLEOTIDE SEQUENCE [LARGE SCALE MRNA]</scope>
    <source>
        <strain>cv. Columbia</strain>
    </source>
</reference>
<reference key="4">
    <citation type="journal article" date="2003" name="Plant Physiol.">
        <title>Members of the Arabidopsis-SKP1-like gene family exhibit a variety of expression patterns and may play diverse roles in Arabidopsis.</title>
        <authorList>
            <person name="Zhao D."/>
            <person name="Ni W."/>
            <person name="Feng B."/>
            <person name="Han T."/>
            <person name="Petrasek M.G."/>
            <person name="Ma H."/>
        </authorList>
    </citation>
    <scope>GENE FAMILY</scope>
    <scope>NOMENCLATURE</scope>
</reference>
<protein>
    <recommendedName>
        <fullName>SKP1-like protein 6</fullName>
        <shortName>AtSK6</shortName>
    </recommendedName>
</protein>
<accession>Q1PEF6</accession>
<accession>A0MF26</accession>
<accession>Q9LF86</accession>
<evidence type="ECO:0000250" key="1"/>
<evidence type="ECO:0000305" key="2"/>
<feature type="chain" id="PRO_0000375247" description="SKP1-like protein 6">
    <location>
        <begin position="1"/>
        <end position="85"/>
    </location>
</feature>
<feature type="region of interest" description="Interaction with the F-box domain of F-box proteins" evidence="1">
    <location>
        <begin position="65"/>
        <end position="85"/>
    </location>
</feature>
<dbReference type="EMBL" id="AL132969">
    <property type="protein sequence ID" value="CAB86910.1"/>
    <property type="status" value="ALT_SEQ"/>
    <property type="molecule type" value="Genomic_DNA"/>
</dbReference>
<dbReference type="EMBL" id="CP002686">
    <property type="protein sequence ID" value="AEE79030.1"/>
    <property type="molecule type" value="Genomic_DNA"/>
</dbReference>
<dbReference type="EMBL" id="DQ446762">
    <property type="protein sequence ID" value="ABE66014.1"/>
    <property type="molecule type" value="mRNA"/>
</dbReference>
<dbReference type="EMBL" id="DQ653150">
    <property type="protein sequence ID" value="ABK28601.1"/>
    <property type="status" value="ALT_SEQ"/>
    <property type="molecule type" value="mRNA"/>
</dbReference>
<dbReference type="PIR" id="T47563">
    <property type="entry name" value="T47563"/>
</dbReference>
<dbReference type="RefSeq" id="NP_566978.1">
    <property type="nucleotide sequence ID" value="NM_115166.1"/>
</dbReference>
<dbReference type="SMR" id="Q1PEF6"/>
<dbReference type="BioGRID" id="9789">
    <property type="interactions" value="9"/>
</dbReference>
<dbReference type="ComplexPortal" id="CPX-1433">
    <property type="entry name" value="SCF(COI1) ubiquitin ligase complex, variant CUL1-RBX1A-ASK6"/>
</dbReference>
<dbReference type="ComplexPortal" id="CPX-1454">
    <property type="entry name" value="SCF(COI1) ubiquitin ligase complex, variant CUL1-RBX1B-ASK6"/>
</dbReference>
<dbReference type="ComplexPortal" id="CPX-1476">
    <property type="entry name" value="SCF(COI1) ubiquitin ligase complex, variant CUL2-RBX1A-ASK6"/>
</dbReference>
<dbReference type="ComplexPortal" id="CPX-1497">
    <property type="entry name" value="SCF(COI1) ubiquitin ligase complex, variant CUL2-RBX1B-ASK6"/>
</dbReference>
<dbReference type="ComplexPortal" id="CPX-1519">
    <property type="entry name" value="SCF(TIR1) ubiquitin ligase complex, variant CUL1-RBX1A-ASK6"/>
</dbReference>
<dbReference type="ComplexPortal" id="CPX-1540">
    <property type="entry name" value="SCF(TIR1) ubiquitin ligase complex, variant CUL1-RBX1B-ASK6"/>
</dbReference>
<dbReference type="ComplexPortal" id="CPX-1562">
    <property type="entry name" value="SCF(TIR1) ubiquitin ligase complex, variant CUL2-RBX1A-ASK6"/>
</dbReference>
<dbReference type="ComplexPortal" id="CPX-1583">
    <property type="entry name" value="SCF(TIR1) ubiquitin ligase complex, variant CUL2-RBX1B-ASK6"/>
</dbReference>
<dbReference type="FunCoup" id="Q1PEF6">
    <property type="interactions" value="6"/>
</dbReference>
<dbReference type="STRING" id="3702.Q1PEF6"/>
<dbReference type="PaxDb" id="3702-AT3G53060.1"/>
<dbReference type="ProteomicsDB" id="246797"/>
<dbReference type="EnsemblPlants" id="AT3G53060.1">
    <property type="protein sequence ID" value="AT3G53060.1"/>
    <property type="gene ID" value="AT3G53060"/>
</dbReference>
<dbReference type="GeneID" id="824472"/>
<dbReference type="Gramene" id="AT3G53060.1">
    <property type="protein sequence ID" value="AT3G53060.1"/>
    <property type="gene ID" value="AT3G53060"/>
</dbReference>
<dbReference type="KEGG" id="ath:AT3G53060"/>
<dbReference type="Araport" id="AT3G53060"/>
<dbReference type="TAIR" id="AT3G53060">
    <property type="gene designation" value="SK6"/>
</dbReference>
<dbReference type="eggNOG" id="KOG1724">
    <property type="taxonomic scope" value="Eukaryota"/>
</dbReference>
<dbReference type="HOGENOM" id="CLU_059252_10_1_1"/>
<dbReference type="InParanoid" id="Q1PEF6"/>
<dbReference type="OMA" id="ICQAYNI"/>
<dbReference type="PhylomeDB" id="Q1PEF6"/>
<dbReference type="UniPathway" id="UPA00143"/>
<dbReference type="PRO" id="PR:Q1PEF6"/>
<dbReference type="Proteomes" id="UP000006548">
    <property type="component" value="Chromosome 3"/>
</dbReference>
<dbReference type="GO" id="GO:0005634">
    <property type="term" value="C:nucleus"/>
    <property type="evidence" value="ECO:0007669"/>
    <property type="project" value="UniProtKB-SubCell"/>
</dbReference>
<dbReference type="GO" id="GO:0019005">
    <property type="term" value="C:SCF ubiquitin ligase complex"/>
    <property type="evidence" value="ECO:0000250"/>
    <property type="project" value="ComplexPortal"/>
</dbReference>
<dbReference type="GO" id="GO:0009734">
    <property type="term" value="P:auxin-activated signaling pathway"/>
    <property type="evidence" value="ECO:0000303"/>
    <property type="project" value="ComplexPortal"/>
</dbReference>
<dbReference type="GO" id="GO:0009867">
    <property type="term" value="P:jasmonic acid mediated signaling pathway"/>
    <property type="evidence" value="ECO:0000315"/>
    <property type="project" value="ComplexPortal"/>
</dbReference>
<dbReference type="GO" id="GO:0016567">
    <property type="term" value="P:protein ubiquitination"/>
    <property type="evidence" value="ECO:0007669"/>
    <property type="project" value="UniProtKB-UniPathway"/>
</dbReference>
<dbReference type="GO" id="GO:0009733">
    <property type="term" value="P:response to auxin"/>
    <property type="evidence" value="ECO:0000303"/>
    <property type="project" value="ComplexPortal"/>
</dbReference>
<dbReference type="GO" id="GO:0009753">
    <property type="term" value="P:response to jasmonic acid"/>
    <property type="evidence" value="ECO:0000315"/>
    <property type="project" value="ComplexPortal"/>
</dbReference>
<dbReference type="GO" id="GO:0006511">
    <property type="term" value="P:ubiquitin-dependent protein catabolic process"/>
    <property type="evidence" value="ECO:0007669"/>
    <property type="project" value="InterPro"/>
</dbReference>
<dbReference type="Gene3D" id="3.30.710.10">
    <property type="entry name" value="Potassium Channel Kv1.1, Chain A"/>
    <property type="match status" value="1"/>
</dbReference>
<dbReference type="InterPro" id="IPR016897">
    <property type="entry name" value="SKP1"/>
</dbReference>
<dbReference type="InterPro" id="IPR001232">
    <property type="entry name" value="SKP1-like"/>
</dbReference>
<dbReference type="InterPro" id="IPR036296">
    <property type="entry name" value="SKP1-like_dim_sf"/>
</dbReference>
<dbReference type="InterPro" id="IPR011333">
    <property type="entry name" value="SKP1/BTB/POZ_sf"/>
</dbReference>
<dbReference type="InterPro" id="IPR016073">
    <property type="entry name" value="Skp1_comp_POZ"/>
</dbReference>
<dbReference type="PANTHER" id="PTHR11165">
    <property type="entry name" value="SKP1"/>
    <property type="match status" value="1"/>
</dbReference>
<dbReference type="Pfam" id="PF03931">
    <property type="entry name" value="Skp1_POZ"/>
    <property type="match status" value="1"/>
</dbReference>
<dbReference type="SMART" id="SM00512">
    <property type="entry name" value="Skp1"/>
    <property type="match status" value="1"/>
</dbReference>
<dbReference type="SUPFAM" id="SSF54695">
    <property type="entry name" value="POZ domain"/>
    <property type="match status" value="1"/>
</dbReference>
<dbReference type="SUPFAM" id="SSF81382">
    <property type="entry name" value="Skp1 dimerisation domain-like"/>
    <property type="match status" value="1"/>
</dbReference>